<keyword id="KW-0566">Pantothenate biosynthesis</keyword>
<keyword id="KW-1185">Reference proteome</keyword>
<gene>
    <name evidence="5" type="primary">panM</name>
    <name evidence="1" type="synonym">panZ</name>
    <name evidence="8" type="synonym">yhhK</name>
    <name evidence="8" type="ordered locus">STM3565</name>
</gene>
<organism>
    <name type="scientific">Salmonella typhimurium (strain LT2 / SGSC1412 / ATCC 700720)</name>
    <dbReference type="NCBI Taxonomy" id="99287"/>
    <lineage>
        <taxon>Bacteria</taxon>
        <taxon>Pseudomonadati</taxon>
        <taxon>Pseudomonadota</taxon>
        <taxon>Gammaproteobacteria</taxon>
        <taxon>Enterobacterales</taxon>
        <taxon>Enterobacteriaceae</taxon>
        <taxon>Salmonella</taxon>
    </lineage>
</organism>
<sequence>MKLTILRLEHFSAQDQIDLGKIWPEYSASSLSVDETHRIYAARFNERLLGAVRVTLSGTQGALDSLRVREITRRRGVGQYLVEEVIRDNPNVSSWWMADVGVEDRSVMAAFMQALGFTAQHDGWEKR</sequence>
<comment type="function">
    <text evidence="1 3 4">Controls both the activation and catalytic activity of PanD in a coenzyme A (CoA)-dependent fashion (By similarity). Binding of CoA or a derivative to PanM leads to interaction with PanD, which promotes the processing and activation of pro-PanD, and subsequent substrate-mediated inhibition of the active form of PanD (By similarity) (PubMed:22497218, PubMed:22782525). Lacks acetyltransferase activity (PubMed:22782525).</text>
</comment>
<comment type="subunit">
    <text evidence="3 4">Interacts with PanD in the presence of CoA (PubMed:22497218, PubMed:22782525). Monomer (PubMed:22497218).</text>
</comment>
<comment type="disruption phenotype">
    <text evidence="3">Deletion results in a pantothenate auxotrophy. Deletion mutant accumulates pro-PanD.</text>
</comment>
<comment type="similarity">
    <text evidence="2 6">Belongs to the PanZ/PanM family.</text>
</comment>
<comment type="caution">
    <text evidence="7">Lacks the conserved catalytic glutamate found in many enzymatically active members of the Gcn5-like N-acetyltransferase (GNAT) family.</text>
</comment>
<feature type="chain" id="PRO_0000432590" description="PanD regulatory factor">
    <location>
        <begin position="1"/>
        <end position="127"/>
    </location>
</feature>
<feature type="domain" description="N-acetyltransferase" evidence="2">
    <location>
        <begin position="1"/>
        <end position="127"/>
    </location>
</feature>
<feature type="binding site" evidence="2">
    <location>
        <begin position="66"/>
        <end position="68"/>
    </location>
    <ligand>
        <name>CoA</name>
        <dbReference type="ChEBI" id="CHEBI:57287"/>
    </ligand>
</feature>
<feature type="binding site" evidence="2">
    <location>
        <begin position="72"/>
        <end position="79"/>
    </location>
    <ligand>
        <name>CoA</name>
        <dbReference type="ChEBI" id="CHEBI:57287"/>
    </ligand>
</feature>
<feature type="mutagenesis site" description="Loss of activity. Cannot bind acetyl-CoA. Does not interact with pro-PanD." evidence="4">
    <original>G</original>
    <variation>L</variation>
    <location>
        <position position="76"/>
    </location>
</feature>
<accession>Q7CPJ9</accession>
<name>PANZ_SALTY</name>
<reference key="1">
    <citation type="journal article" date="2001" name="Nature">
        <title>Complete genome sequence of Salmonella enterica serovar Typhimurium LT2.</title>
        <authorList>
            <person name="McClelland M."/>
            <person name="Sanderson K.E."/>
            <person name="Spieth J."/>
            <person name="Clifton S.W."/>
            <person name="Latreille P."/>
            <person name="Courtney L."/>
            <person name="Porwollik S."/>
            <person name="Ali J."/>
            <person name="Dante M."/>
            <person name="Du F."/>
            <person name="Hou S."/>
            <person name="Layman D."/>
            <person name="Leonard S."/>
            <person name="Nguyen C."/>
            <person name="Scott K."/>
            <person name="Holmes A."/>
            <person name="Grewal N."/>
            <person name="Mulvaney E."/>
            <person name="Ryan E."/>
            <person name="Sun H."/>
            <person name="Florea L."/>
            <person name="Miller W."/>
            <person name="Stoneking T."/>
            <person name="Nhan M."/>
            <person name="Waterston R."/>
            <person name="Wilson R.K."/>
        </authorList>
    </citation>
    <scope>NUCLEOTIDE SEQUENCE [LARGE SCALE GENOMIC DNA]</scope>
    <source>
        <strain>LT2 / SGSC1412 / ATCC 700720</strain>
    </source>
</reference>
<reference key="2">
    <citation type="journal article" date="2012" name="Mol. Microbiol.">
        <title>The missing link in coenzyme A biosynthesis: PanM (formerly YhhK), a yeast GCN5 acetyltransferase homologue triggers aspartate decarboxylase (PanD) maturation in Salmonella enterica.</title>
        <authorList>
            <person name="Stuecker T.N."/>
            <person name="Hodge K.M."/>
            <person name="Escalante-Semerena J.C."/>
        </authorList>
    </citation>
    <scope>FUNCTION</scope>
    <scope>SUBUNIT</scope>
    <scope>INTERACTION WITH PAND</scope>
    <scope>DISRUPTION PHENOTYPE</scope>
    <source>
        <strain>LT2</strain>
    </source>
</reference>
<reference key="3">
    <citation type="journal article" date="2012" name="MBio">
        <title>PanM, an acetyl-coenzyme A sensor required for maturation of L-aspartate decarboxylase (PanD).</title>
        <authorList>
            <person name="Stuecker T.N."/>
            <person name="Tucker A.C."/>
            <person name="Escalante-Semerena J.C."/>
        </authorList>
    </citation>
    <scope>FUNCTION</scope>
    <scope>INTERACTION WITH PAND</scope>
    <scope>MUTAGENESIS OF GLY-76</scope>
    <source>
        <strain>LT2</strain>
    </source>
</reference>
<evidence type="ECO:0000250" key="1">
    <source>
        <dbReference type="UniProtKB" id="P37613"/>
    </source>
</evidence>
<evidence type="ECO:0000255" key="2">
    <source>
        <dbReference type="HAMAP-Rule" id="MF_02018"/>
    </source>
</evidence>
<evidence type="ECO:0000269" key="3">
    <source>
    </source>
</evidence>
<evidence type="ECO:0000269" key="4">
    <source>
    </source>
</evidence>
<evidence type="ECO:0000303" key="5">
    <source>
    </source>
</evidence>
<evidence type="ECO:0000305" key="6"/>
<evidence type="ECO:0000305" key="7">
    <source>
    </source>
</evidence>
<evidence type="ECO:0000312" key="8">
    <source>
        <dbReference type="EMBL" id="AAL22425.1"/>
    </source>
</evidence>
<proteinExistence type="evidence at protein level"/>
<dbReference type="EMBL" id="AE006468">
    <property type="protein sequence ID" value="AAL22425.1"/>
    <property type="molecule type" value="Genomic_DNA"/>
</dbReference>
<dbReference type="RefSeq" id="NP_462466.1">
    <property type="nucleotide sequence ID" value="NC_003197.2"/>
</dbReference>
<dbReference type="RefSeq" id="WP_000778873.1">
    <property type="nucleotide sequence ID" value="NC_003197.2"/>
</dbReference>
<dbReference type="SMR" id="Q7CPJ9"/>
<dbReference type="STRING" id="99287.STM3565"/>
<dbReference type="PaxDb" id="99287-STM3565"/>
<dbReference type="GeneID" id="1255088"/>
<dbReference type="KEGG" id="stm:STM3565"/>
<dbReference type="PATRIC" id="fig|99287.12.peg.3768"/>
<dbReference type="HOGENOM" id="CLU_135649_0_0_6"/>
<dbReference type="OMA" id="KIWPSQD"/>
<dbReference type="PhylomeDB" id="Q7CPJ9"/>
<dbReference type="BioCyc" id="SENT99287:STM3565-MONOMER"/>
<dbReference type="Proteomes" id="UP000001014">
    <property type="component" value="Chromosome"/>
</dbReference>
<dbReference type="GO" id="GO:0016747">
    <property type="term" value="F:acyltransferase activity, transferring groups other than amino-acyl groups"/>
    <property type="evidence" value="ECO:0007669"/>
    <property type="project" value="InterPro"/>
</dbReference>
<dbReference type="GO" id="GO:0015940">
    <property type="term" value="P:pantothenate biosynthetic process"/>
    <property type="evidence" value="ECO:0007669"/>
    <property type="project" value="UniProtKB-UniRule"/>
</dbReference>
<dbReference type="GO" id="GO:0031638">
    <property type="term" value="P:zymogen activation"/>
    <property type="evidence" value="ECO:0007669"/>
    <property type="project" value="InterPro"/>
</dbReference>
<dbReference type="Gene3D" id="3.40.630.30">
    <property type="match status" value="1"/>
</dbReference>
<dbReference type="HAMAP" id="MF_02018">
    <property type="entry name" value="PanZ_PanM"/>
    <property type="match status" value="1"/>
</dbReference>
<dbReference type="InterPro" id="IPR016181">
    <property type="entry name" value="Acyl_CoA_acyltransferase"/>
</dbReference>
<dbReference type="InterPro" id="IPR000182">
    <property type="entry name" value="GNAT_dom"/>
</dbReference>
<dbReference type="InterPro" id="IPR032900">
    <property type="entry name" value="PanZ"/>
</dbReference>
<dbReference type="InterPro" id="IPR040448">
    <property type="entry name" value="PanZ_GNAT"/>
</dbReference>
<dbReference type="NCBIfam" id="NF033213">
    <property type="entry name" value="matur_PanM"/>
    <property type="match status" value="1"/>
</dbReference>
<dbReference type="Pfam" id="PF12568">
    <property type="entry name" value="PanZ"/>
    <property type="match status" value="1"/>
</dbReference>
<dbReference type="SUPFAM" id="SSF55729">
    <property type="entry name" value="Acyl-CoA N-acyltransferases (Nat)"/>
    <property type="match status" value="1"/>
</dbReference>
<dbReference type="PROSITE" id="PS51186">
    <property type="entry name" value="GNAT"/>
    <property type="match status" value="1"/>
</dbReference>
<protein>
    <recommendedName>
        <fullName evidence="2 6">PanD regulatory factor</fullName>
    </recommendedName>
</protein>